<name>RECF_SALCH</name>
<dbReference type="EMBL" id="AE017220">
    <property type="protein sequence ID" value="AAX67660.1"/>
    <property type="molecule type" value="Genomic_DNA"/>
</dbReference>
<dbReference type="RefSeq" id="WP_000060081.1">
    <property type="nucleotide sequence ID" value="NC_006905.1"/>
</dbReference>
<dbReference type="SMR" id="Q57I02"/>
<dbReference type="KEGG" id="sec:SCH_3754"/>
<dbReference type="HOGENOM" id="CLU_040267_0_0_6"/>
<dbReference type="Proteomes" id="UP000000538">
    <property type="component" value="Chromosome"/>
</dbReference>
<dbReference type="GO" id="GO:0005737">
    <property type="term" value="C:cytoplasm"/>
    <property type="evidence" value="ECO:0007669"/>
    <property type="project" value="UniProtKB-SubCell"/>
</dbReference>
<dbReference type="GO" id="GO:0005524">
    <property type="term" value="F:ATP binding"/>
    <property type="evidence" value="ECO:0007669"/>
    <property type="project" value="UniProtKB-UniRule"/>
</dbReference>
<dbReference type="GO" id="GO:0003697">
    <property type="term" value="F:single-stranded DNA binding"/>
    <property type="evidence" value="ECO:0007669"/>
    <property type="project" value="UniProtKB-UniRule"/>
</dbReference>
<dbReference type="GO" id="GO:0006260">
    <property type="term" value="P:DNA replication"/>
    <property type="evidence" value="ECO:0007669"/>
    <property type="project" value="UniProtKB-UniRule"/>
</dbReference>
<dbReference type="GO" id="GO:0000731">
    <property type="term" value="P:DNA synthesis involved in DNA repair"/>
    <property type="evidence" value="ECO:0007669"/>
    <property type="project" value="TreeGrafter"/>
</dbReference>
<dbReference type="GO" id="GO:0006302">
    <property type="term" value="P:double-strand break repair"/>
    <property type="evidence" value="ECO:0007669"/>
    <property type="project" value="TreeGrafter"/>
</dbReference>
<dbReference type="GO" id="GO:0009432">
    <property type="term" value="P:SOS response"/>
    <property type="evidence" value="ECO:0007669"/>
    <property type="project" value="UniProtKB-UniRule"/>
</dbReference>
<dbReference type="FunFam" id="1.20.1050.90:FF:000001">
    <property type="entry name" value="DNA replication and repair protein RecF"/>
    <property type="match status" value="1"/>
</dbReference>
<dbReference type="Gene3D" id="3.40.50.300">
    <property type="entry name" value="P-loop containing nucleotide triphosphate hydrolases"/>
    <property type="match status" value="1"/>
</dbReference>
<dbReference type="Gene3D" id="1.20.1050.90">
    <property type="entry name" value="RecF/RecN/SMC, N-terminal domain"/>
    <property type="match status" value="1"/>
</dbReference>
<dbReference type="HAMAP" id="MF_00365">
    <property type="entry name" value="RecF"/>
    <property type="match status" value="1"/>
</dbReference>
<dbReference type="InterPro" id="IPR001238">
    <property type="entry name" value="DNA-binding_RecF"/>
</dbReference>
<dbReference type="InterPro" id="IPR018078">
    <property type="entry name" value="DNA-binding_RecF_CS"/>
</dbReference>
<dbReference type="InterPro" id="IPR027417">
    <property type="entry name" value="P-loop_NTPase"/>
</dbReference>
<dbReference type="InterPro" id="IPR003395">
    <property type="entry name" value="RecF/RecN/SMC_N"/>
</dbReference>
<dbReference type="InterPro" id="IPR042174">
    <property type="entry name" value="RecF_2"/>
</dbReference>
<dbReference type="NCBIfam" id="TIGR00611">
    <property type="entry name" value="recf"/>
    <property type="match status" value="1"/>
</dbReference>
<dbReference type="PANTHER" id="PTHR32182">
    <property type="entry name" value="DNA REPLICATION AND REPAIR PROTEIN RECF"/>
    <property type="match status" value="1"/>
</dbReference>
<dbReference type="PANTHER" id="PTHR32182:SF0">
    <property type="entry name" value="DNA REPLICATION AND REPAIR PROTEIN RECF"/>
    <property type="match status" value="1"/>
</dbReference>
<dbReference type="Pfam" id="PF02463">
    <property type="entry name" value="SMC_N"/>
    <property type="match status" value="1"/>
</dbReference>
<dbReference type="SUPFAM" id="SSF52540">
    <property type="entry name" value="P-loop containing nucleoside triphosphate hydrolases"/>
    <property type="match status" value="1"/>
</dbReference>
<dbReference type="PROSITE" id="PS00617">
    <property type="entry name" value="RECF_1"/>
    <property type="match status" value="1"/>
</dbReference>
<dbReference type="PROSITE" id="PS00618">
    <property type="entry name" value="RECF_2"/>
    <property type="match status" value="1"/>
</dbReference>
<organism>
    <name type="scientific">Salmonella choleraesuis (strain SC-B67)</name>
    <dbReference type="NCBI Taxonomy" id="321314"/>
    <lineage>
        <taxon>Bacteria</taxon>
        <taxon>Pseudomonadati</taxon>
        <taxon>Pseudomonadota</taxon>
        <taxon>Gammaproteobacteria</taxon>
        <taxon>Enterobacterales</taxon>
        <taxon>Enterobacteriaceae</taxon>
        <taxon>Salmonella</taxon>
    </lineage>
</organism>
<sequence length="357" mass="40484">MSLTRLLIKDFRNIENADLALSPGFNFLVGANGSGKTSVLEAIYTLGHGRAFRSLQPGRVIRHEQEAFVLHGRLQGEERETSIGLTKDKQGDSKVRIDGTDGHKIAELAHLMPMQLITPEGFTLLNGGPKYRRAFLDWGCFHNEAGFFTAWSNLKRLLKQRNAALRQVSRYEQLRPWDKELIPLAEQISTWRAEYSSAIAQDMADTCQQFLPEFSLTFSFQRGWEKETDYADVLERSFERDRMLTYTAHGPHKADFRIRADGAPVEDTLSRGQLKLLMCALRLAQGEFLTRESGRRCLYLIDDFASELDDARRGLLASRLKATQSQVFVSAISAEHVIDMSDENSKMFTVEKGKITD</sequence>
<feature type="chain" id="PRO_0000236141" description="DNA replication and repair protein RecF">
    <location>
        <begin position="1"/>
        <end position="357"/>
    </location>
</feature>
<feature type="binding site" evidence="1">
    <location>
        <begin position="30"/>
        <end position="37"/>
    </location>
    <ligand>
        <name>ATP</name>
        <dbReference type="ChEBI" id="CHEBI:30616"/>
    </ligand>
</feature>
<evidence type="ECO:0000255" key="1">
    <source>
        <dbReference type="HAMAP-Rule" id="MF_00365"/>
    </source>
</evidence>
<proteinExistence type="inferred from homology"/>
<protein>
    <recommendedName>
        <fullName evidence="1">DNA replication and repair protein RecF</fullName>
    </recommendedName>
</protein>
<accession>Q57I02</accession>
<keyword id="KW-0067">ATP-binding</keyword>
<keyword id="KW-0963">Cytoplasm</keyword>
<keyword id="KW-0227">DNA damage</keyword>
<keyword id="KW-0234">DNA repair</keyword>
<keyword id="KW-0235">DNA replication</keyword>
<keyword id="KW-0238">DNA-binding</keyword>
<keyword id="KW-0547">Nucleotide-binding</keyword>
<keyword id="KW-0742">SOS response</keyword>
<reference key="1">
    <citation type="journal article" date="2005" name="Nucleic Acids Res.">
        <title>The genome sequence of Salmonella enterica serovar Choleraesuis, a highly invasive and resistant zoonotic pathogen.</title>
        <authorList>
            <person name="Chiu C.-H."/>
            <person name="Tang P."/>
            <person name="Chu C."/>
            <person name="Hu S."/>
            <person name="Bao Q."/>
            <person name="Yu J."/>
            <person name="Chou Y.-Y."/>
            <person name="Wang H.-S."/>
            <person name="Lee Y.-S."/>
        </authorList>
    </citation>
    <scope>NUCLEOTIDE SEQUENCE [LARGE SCALE GENOMIC DNA]</scope>
    <source>
        <strain>SC-B67</strain>
    </source>
</reference>
<gene>
    <name evidence="1" type="primary">recF</name>
    <name type="ordered locus">SCH_3754</name>
</gene>
<comment type="function">
    <text evidence="1">The RecF protein is involved in DNA metabolism; it is required for DNA replication and normal SOS inducibility. RecF binds preferentially to single-stranded, linear DNA. It also seems to bind ATP.</text>
</comment>
<comment type="subcellular location">
    <subcellularLocation>
        <location evidence="1">Cytoplasm</location>
    </subcellularLocation>
</comment>
<comment type="similarity">
    <text evidence="1">Belongs to the RecF family.</text>
</comment>